<gene>
    <name evidence="20" type="primary">sbp-1</name>
    <name evidence="20" type="synonym">hlh-20</name>
    <name evidence="16 20" type="synonym">lpd-1</name>
    <name evidence="20" type="synonym">SREBP</name>
    <name evidence="20" type="ORF">Y47D3B.7</name>
</gene>
<protein>
    <recommendedName>
        <fullName evidence="20">Sterol regulatory element binding protein sbp-1</fullName>
        <shortName evidence="18">SREBP sbp-1</shortName>
    </recommendedName>
    <component>
        <recommendedName>
            <fullName evidence="17">Processed sterol regulatory element binding protein sbp-1</fullName>
        </recommendedName>
    </component>
</protein>
<evidence type="ECO:0000250" key="1">
    <source>
        <dbReference type="UniProtKB" id="P36956"/>
    </source>
</evidence>
<evidence type="ECO:0000250" key="2">
    <source>
        <dbReference type="UniProtKB" id="Q9WTN3"/>
    </source>
</evidence>
<evidence type="ECO:0000255" key="3"/>
<evidence type="ECO:0000255" key="4">
    <source>
        <dbReference type="PROSITE-ProRule" id="PRU00981"/>
    </source>
</evidence>
<evidence type="ECO:0000256" key="5">
    <source>
        <dbReference type="SAM" id="MobiDB-lite"/>
    </source>
</evidence>
<evidence type="ECO:0000269" key="6">
    <source>
    </source>
</evidence>
<evidence type="ECO:0000269" key="7">
    <source>
    </source>
</evidence>
<evidence type="ECO:0000269" key="8">
    <source>
    </source>
</evidence>
<evidence type="ECO:0000269" key="9">
    <source>
    </source>
</evidence>
<evidence type="ECO:0000269" key="10">
    <source>
    </source>
</evidence>
<evidence type="ECO:0000269" key="11">
    <source>
    </source>
</evidence>
<evidence type="ECO:0000269" key="12">
    <source>
    </source>
</evidence>
<evidence type="ECO:0000269" key="13">
    <source>
    </source>
</evidence>
<evidence type="ECO:0000269" key="14">
    <source>
    </source>
</evidence>
<evidence type="ECO:0000269" key="15">
    <source>
    </source>
</evidence>
<evidence type="ECO:0000303" key="16">
    <source>
    </source>
</evidence>
<evidence type="ECO:0000303" key="17">
    <source>
    </source>
</evidence>
<evidence type="ECO:0000305" key="18"/>
<evidence type="ECO:0000312" key="19">
    <source>
        <dbReference type="Proteomes" id="UP000001940"/>
    </source>
</evidence>
<evidence type="ECO:0000312" key="20">
    <source>
        <dbReference type="WormBase" id="Y47D3B.7"/>
    </source>
</evidence>
<name>SRBPH_CAEEL</name>
<keyword id="KW-0175">Coiled coil</keyword>
<keyword id="KW-0238">DNA-binding</keyword>
<keyword id="KW-0256">Endoplasmic reticulum</keyword>
<keyword id="KW-0472">Membrane</keyword>
<keyword id="KW-0539">Nucleus</keyword>
<keyword id="KW-1185">Reference proteome</keyword>
<keyword id="KW-0804">Transcription</keyword>
<keyword id="KW-0805">Transcription regulation</keyword>
<keyword id="KW-0812">Transmembrane</keyword>
<keyword id="KW-1133">Transmembrane helix</keyword>
<keyword id="KW-0832">Ubl conjugation</keyword>
<organism evidence="19">
    <name type="scientific">Caenorhabditis elegans</name>
    <dbReference type="NCBI Taxonomy" id="6239"/>
    <lineage>
        <taxon>Eukaryota</taxon>
        <taxon>Metazoa</taxon>
        <taxon>Ecdysozoa</taxon>
        <taxon>Nematoda</taxon>
        <taxon>Chromadorea</taxon>
        <taxon>Rhabditida</taxon>
        <taxon>Rhabditina</taxon>
        <taxon>Rhabditomorpha</taxon>
        <taxon>Rhabditoidea</taxon>
        <taxon>Rhabditidae</taxon>
        <taxon>Peloderinae</taxon>
        <taxon>Caenorhabditis</taxon>
    </lineage>
</organism>
<dbReference type="EMBL" id="BX284603">
    <property type="protein sequence ID" value="CAA21042.1"/>
    <property type="molecule type" value="Genomic_DNA"/>
</dbReference>
<dbReference type="PIR" id="T26954">
    <property type="entry name" value="T26954"/>
</dbReference>
<dbReference type="RefSeq" id="NP_499472.1">
    <property type="nucleotide sequence ID" value="NM_067071.8"/>
</dbReference>
<dbReference type="SMR" id="Q9XX00"/>
<dbReference type="DIP" id="DIP-24367N"/>
<dbReference type="FunCoup" id="Q9XX00">
    <property type="interactions" value="2123"/>
</dbReference>
<dbReference type="IntAct" id="Q9XX00">
    <property type="interactions" value="4"/>
</dbReference>
<dbReference type="STRING" id="6239.Y47D3B.7.1"/>
<dbReference type="PaxDb" id="6239-Y47D3B.7"/>
<dbReference type="PeptideAtlas" id="Q9XX00"/>
<dbReference type="EnsemblMetazoa" id="Y47D3B.7.1">
    <property type="protein sequence ID" value="Y47D3B.7.1"/>
    <property type="gene ID" value="WBGene00004735"/>
</dbReference>
<dbReference type="GeneID" id="176574"/>
<dbReference type="KEGG" id="cel:CELE_Y47D3B.7"/>
<dbReference type="UCSC" id="Y47D3B.7">
    <property type="organism name" value="c. elegans"/>
</dbReference>
<dbReference type="AGR" id="WB:WBGene00004735"/>
<dbReference type="CTD" id="176574"/>
<dbReference type="WormBase" id="Y47D3B.7">
    <property type="protein sequence ID" value="CE19180"/>
    <property type="gene ID" value="WBGene00004735"/>
    <property type="gene designation" value="sbp-1"/>
</dbReference>
<dbReference type="eggNOG" id="KOG2588">
    <property type="taxonomic scope" value="Eukaryota"/>
</dbReference>
<dbReference type="GeneTree" id="ENSGT00940000168984"/>
<dbReference type="HOGENOM" id="CLU_300661_0_0_1"/>
<dbReference type="InParanoid" id="Q9XX00"/>
<dbReference type="OMA" id="QQAVMIT"/>
<dbReference type="OrthoDB" id="2133190at2759"/>
<dbReference type="PhylomeDB" id="Q9XX00"/>
<dbReference type="Reactome" id="R-CEL-1655829">
    <property type="pathway name" value="Regulation of cholesterol biosynthesis by SREBP (SREBF)"/>
</dbReference>
<dbReference type="Reactome" id="R-CEL-191273">
    <property type="pathway name" value="Cholesterol biosynthesis"/>
</dbReference>
<dbReference type="PRO" id="PR:Q9XX00"/>
<dbReference type="Proteomes" id="UP000001940">
    <property type="component" value="Chromosome III"/>
</dbReference>
<dbReference type="Bgee" id="WBGene00004735">
    <property type="expression patterns" value="Expressed in material anatomical entity and 5 other cell types or tissues"/>
</dbReference>
<dbReference type="GO" id="GO:0005789">
    <property type="term" value="C:endoplasmic reticulum membrane"/>
    <property type="evidence" value="ECO:0007669"/>
    <property type="project" value="UniProtKB-SubCell"/>
</dbReference>
<dbReference type="GO" id="GO:0005634">
    <property type="term" value="C:nucleus"/>
    <property type="evidence" value="ECO:0000314"/>
    <property type="project" value="UniProtKB"/>
</dbReference>
<dbReference type="GO" id="GO:0003700">
    <property type="term" value="F:DNA-binding transcription factor activity"/>
    <property type="evidence" value="ECO:0000314"/>
    <property type="project" value="WormBase"/>
</dbReference>
<dbReference type="GO" id="GO:0000981">
    <property type="term" value="F:DNA-binding transcription factor activity, RNA polymerase II-specific"/>
    <property type="evidence" value="ECO:0000318"/>
    <property type="project" value="GO_Central"/>
</dbReference>
<dbReference type="GO" id="GO:0046983">
    <property type="term" value="F:protein dimerization activity"/>
    <property type="evidence" value="ECO:0007669"/>
    <property type="project" value="InterPro"/>
</dbReference>
<dbReference type="GO" id="GO:0000978">
    <property type="term" value="F:RNA polymerase II cis-regulatory region sequence-specific DNA binding"/>
    <property type="evidence" value="ECO:0000318"/>
    <property type="project" value="GO_Central"/>
</dbReference>
<dbReference type="GO" id="GO:0071294">
    <property type="term" value="P:cellular response to zinc ion"/>
    <property type="evidence" value="ECO:0000315"/>
    <property type="project" value="UniProtKB"/>
</dbReference>
<dbReference type="GO" id="GO:0008340">
    <property type="term" value="P:determination of adult lifespan"/>
    <property type="evidence" value="ECO:0000315"/>
    <property type="project" value="WormBase"/>
</dbReference>
<dbReference type="GO" id="GO:0006633">
    <property type="term" value="P:fatty acid biosynthetic process"/>
    <property type="evidence" value="ECO:0000315"/>
    <property type="project" value="UniProtKB"/>
</dbReference>
<dbReference type="GO" id="GO:0040011">
    <property type="term" value="P:locomotion"/>
    <property type="evidence" value="ECO:0000315"/>
    <property type="project" value="WormBase"/>
</dbReference>
<dbReference type="GO" id="GO:0001676">
    <property type="term" value="P:long-chain fatty acid metabolic process"/>
    <property type="evidence" value="ECO:0000315"/>
    <property type="project" value="UniProtKB"/>
</dbReference>
<dbReference type="GO" id="GO:1902321">
    <property type="term" value="P:methyl-branched fatty acid biosynthetic process"/>
    <property type="evidence" value="ECO:0000315"/>
    <property type="project" value="UniProtKB"/>
</dbReference>
<dbReference type="GO" id="GO:0010628">
    <property type="term" value="P:positive regulation of gene expression"/>
    <property type="evidence" value="ECO:0000315"/>
    <property type="project" value="UniProtKB"/>
</dbReference>
<dbReference type="GO" id="GO:0010884">
    <property type="term" value="P:positive regulation of lipid storage"/>
    <property type="evidence" value="ECO:0000315"/>
    <property type="project" value="WormBase"/>
</dbReference>
<dbReference type="GO" id="GO:0045944">
    <property type="term" value="P:positive regulation of transcription by RNA polymerase II"/>
    <property type="evidence" value="ECO:0000315"/>
    <property type="project" value="WormBase"/>
</dbReference>
<dbReference type="GO" id="GO:0010468">
    <property type="term" value="P:regulation of gene expression"/>
    <property type="evidence" value="ECO:0000315"/>
    <property type="project" value="UniProtKB"/>
</dbReference>
<dbReference type="GO" id="GO:0040014">
    <property type="term" value="P:regulation of multicellular organism growth"/>
    <property type="evidence" value="ECO:0000315"/>
    <property type="project" value="WormBase"/>
</dbReference>
<dbReference type="GO" id="GO:0006357">
    <property type="term" value="P:regulation of transcription by RNA polymerase II"/>
    <property type="evidence" value="ECO:0000314"/>
    <property type="project" value="WormBase"/>
</dbReference>
<dbReference type="GO" id="GO:0034059">
    <property type="term" value="P:response to anoxia"/>
    <property type="evidence" value="ECO:0000315"/>
    <property type="project" value="WormBase"/>
</dbReference>
<dbReference type="FunFam" id="4.10.280.10:FF:000158">
    <property type="entry name" value="Sterol regulatory element Binding Protein"/>
    <property type="match status" value="1"/>
</dbReference>
<dbReference type="Gene3D" id="4.10.280.10">
    <property type="entry name" value="Helix-loop-helix DNA-binding domain"/>
    <property type="match status" value="1"/>
</dbReference>
<dbReference type="InterPro" id="IPR011598">
    <property type="entry name" value="bHLH_dom"/>
</dbReference>
<dbReference type="InterPro" id="IPR036638">
    <property type="entry name" value="HLH_DNA-bd_sf"/>
</dbReference>
<dbReference type="PANTHER" id="PTHR46062:SF1">
    <property type="entry name" value="LP12374P"/>
    <property type="match status" value="1"/>
</dbReference>
<dbReference type="PANTHER" id="PTHR46062">
    <property type="entry name" value="STEROL REGULATORY ELEMENT-BINDING PROTEIN"/>
    <property type="match status" value="1"/>
</dbReference>
<dbReference type="Pfam" id="PF00010">
    <property type="entry name" value="HLH"/>
    <property type="match status" value="1"/>
</dbReference>
<dbReference type="SMART" id="SM00353">
    <property type="entry name" value="HLH"/>
    <property type="match status" value="1"/>
</dbReference>
<dbReference type="SUPFAM" id="SSF47459">
    <property type="entry name" value="HLH, helix-loop-helix DNA-binding domain"/>
    <property type="match status" value="1"/>
</dbReference>
<dbReference type="PROSITE" id="PS50888">
    <property type="entry name" value="BHLH"/>
    <property type="match status" value="1"/>
</dbReference>
<comment type="function">
    <text evidence="6 7 8 9 10 11 12 13 14 15">Transcription factor involved in maintaining normal fat levels (PubMed:19187779). Regulates the expression of genes involved in lipid metabolism in response to nutrient availability, such as the fatty-acid desaturases fat-5, fat-6 and fat-7 (PubMed:12530969, PubMed:19936816). In response to a high-glucose diet, promotes fatty acid synthesis, elongation and desaturation, acting in concert with transcription factor mxl-3 (PubMed:29113111). Plays a role in synthesis of monomethyl branched-chain fatty acids (mmBCFAs) as well as other very-long-chain fatty acids (PubMed:15340492). Downstream of the cis-Golgi membrane protein eas-1/GOLT1B and the E3 ubiquitin ligase rnf-145/RNF145, plays a role in the regulation of glial size, perhaps by modulating synthesis of long-chain polyunsaturated fatty-acids (LC-PUFA) (PubMed:33370778). Modulates expression of genes in the one-carbon cycle, which produces the methyl donor S-adenosylmethionine (SAM) (PubMed:22035958). Probably involved in a feedback loop in which decreased levels of SAM lead to increased transcriptional activity of sbp-1, thereby causing lipid accumulation (PubMed:22035958). Involved in the negative regulation of zinc homeostasis (PubMed:28710073). Involved in the response to simulated microgravity, in concert with Mediator complex subunit mdt-15, probably acting in the intestine (PubMed:32448509). Plays a role in transgenerational lipid accumulation in response to a high-fat diet, probably acting by upregulating wdr-5.1 expression to increase the level of trimethylated 'Lys-4' histone H3 (H3K4me3), which may then induce the expression of fat-5, fat-6 and fat-7 (PubMed:35140229). May act as an oxygen sensor for lipid metabolism (PubMed:19187779).</text>
</comment>
<comment type="function">
    <molecule>Sterol regulatory element binding protein sbp-1</molecule>
    <text evidence="2">Precursor of the transcription factor form, which is embedded in the endoplasmic reticulum membrane (By similarity). Processing of this form allows release of the transcription factor form that translocates into the nucleus and activates transcription of genes involved in sterol biosynthesis and lipid homeostasis (By similarity).</text>
</comment>
<comment type="function">
    <molecule>Processed sterol regulatory element binding protein sbp-1</molecule>
    <text evidence="2">Key transcription factor that regulates expression of genes involved in sterol biosynthesis and lipid homeostasis.</text>
</comment>
<comment type="subcellular location">
    <subcellularLocation>
        <location evidence="10 11">Nucleus</location>
    </subcellularLocation>
    <text evidence="10 11 14">Localization to nucleus is enhanced in a sams-1-dependent manner (PubMed:22035958). Localized to nucleus in an eas-1-dependent manner (PubMed:33370778). Nuclear localization is reduced by lowering the level of zinc (PubMed:28710073). Does not accumulate in the nucleus of AMsh glial cells during the early larval stages (L1 to L3), but has strong nuclear localization in adulthood (PubMed:33370778).</text>
</comment>
<comment type="subcellular location">
    <molecule>Sterol regulatory element binding protein sbp-1</molecule>
    <subcellularLocation>
        <location evidence="2">Endoplasmic reticulum membrane</location>
        <topology evidence="3">Multi-pass membrane protein</topology>
    </subcellularLocation>
</comment>
<comment type="subcellular location">
    <molecule>Processed sterol regulatory element binding protein sbp-1</molecule>
    <subcellularLocation>
        <location evidence="4">Nucleus</location>
    </subcellularLocation>
</comment>
<comment type="tissue specificity">
    <text evidence="6 14">Broadly expressed, including many cells in the head (PubMed:33370778). Expressed in the intestine (PubMed:12530969).</text>
</comment>
<comment type="induction">
    <text evidence="8 9 12 13">Expression increased by oxygen deprivation (PubMed:19187779). Expression increased by glucose or fructose supplementation (PubMed:19936816, PubMed:29113111). Expression increased by simulated microgravity (PubMed:32448509).</text>
</comment>
<comment type="PTM">
    <molecule>Sterol regulatory element binding protein sbp-1</molecule>
    <text evidence="1">Processed in the Golgi apparatus, releasing the protein from the membrane.</text>
</comment>
<comment type="PTM">
    <molecule>Processed sterol regulatory element binding protein sbp-1</molecule>
    <text evidence="1">Ubiquitinated; the nuclear form has a rapid turnover and is rapidly ubiquitinated and degraded by the proteasome in the nucleus.</text>
</comment>
<comment type="disruption phenotype">
    <text evidence="6 7 8 9 13 15">RNAi-mediated knockdown causes early larval arrest and a pale, skinny appearance; paleness due to absence of dark, lipid-laden fat granules from the intestine (PubMed:12530969, PubMed:19936816). Decrease in body size, delayed growth, fewer eggs laid and 5-6 days after being laid, many eggs hatch inside the body (PubMed:19936816). Exposure to oleic or linoleic acid returns body size almost to normal and also increases number of eggs laid (PubMed:19936816). In normoxic conditions, reduces total fat levels, but has no effect in anoxia (PubMed:19187779). Reduces the increase in body width/length ratio caused by anoxia (PubMed:19187779). Alters fatty-acid composition, including of monomethyl branched-chain fatty acids (mmBCFAs) (PubMed:15340492). Exacerbates induction of reactive oxygen species (ROS) production and decrease in locomotion behavior caused by simulated microgravity (PubMed:32448509). Knockdown in the first generation offspring (F1) of adults fed a high-fat diet prevents lipid accumulation (PubMed:35140229). Tissue-specific knockdown in any of several different tissues abolishes elevated levels of H3K4me3 modification (PubMed:35140229).</text>
</comment>
<reference evidence="19" key="1">
    <citation type="journal article" date="1998" name="Science">
        <title>Genome sequence of the nematode C. elegans: a platform for investigating biology.</title>
        <authorList>
            <consortium name="The C. elegans sequencing consortium"/>
        </authorList>
    </citation>
    <scope>NUCLEOTIDE SEQUENCE [LARGE SCALE GENOMIC DNA]</scope>
    <source>
        <strain evidence="19">Bristol N2</strain>
    </source>
</reference>
<reference evidence="18" key="2">
    <citation type="journal article" date="2003" name="Dev. Cell">
        <title>C elegans: a model for exploring the genetics of fat storage.</title>
        <authorList>
            <person name="McKay R.M."/>
            <person name="McKay J.P."/>
            <person name="Avery L."/>
            <person name="Graff J.M."/>
        </authorList>
    </citation>
    <scope>FUNCTION</scope>
    <scope>TISSUE SPECIFICITY</scope>
    <scope>DISRUPTION PHENOTYPE</scope>
</reference>
<reference evidence="18" key="3">
    <citation type="journal article" date="2004" name="PLoS Biol.">
        <title>Monomethyl branched-chain fatty acids play an essential role in Caenorhabditis elegans development.</title>
        <authorList>
            <person name="Kniazeva M."/>
            <person name="Crawford Q.T."/>
            <person name="Seiber M."/>
            <person name="Wang C.Y."/>
            <person name="Han M."/>
        </authorList>
    </citation>
    <scope>FUNCTION</scope>
    <scope>DISRUPTION PHENOTYPE</scope>
</reference>
<reference evidence="18" key="4">
    <citation type="journal article" date="2009" name="FEBS Lett.">
        <title>Essential role of SBP-1 activation in oxygen deprivation induced lipid accumulation and increase in body width/length ratio in Caenorhabditis elegans.</title>
        <authorList>
            <person name="Taghibiglou C."/>
            <person name="Martin H.G."/>
            <person name="Rose J.K."/>
            <person name="Ivanova N."/>
            <person name="Lin C.H."/>
            <person name="Lau H.L."/>
            <person name="Rai S."/>
            <person name="Wang Y.T."/>
            <person name="Rankin C.H."/>
        </authorList>
    </citation>
    <scope>FUNCTION</scope>
    <scope>INDUCTION</scope>
    <scope>DISRUPTION PHENOTYPE</scope>
</reference>
<reference evidence="18" key="5">
    <citation type="journal article" date="2010" name="Genes Nutr.">
        <title>Fat accumulation in Caenorhabditis elegans is mediated by SREBP homolog SBP-1.</title>
        <authorList>
            <person name="Nomura T."/>
            <person name="Horikawa M."/>
            <person name="Shimamura S."/>
            <person name="Hashimoto T."/>
            <person name="Sakamoto K."/>
        </authorList>
    </citation>
    <scope>FUNCTION</scope>
    <scope>INDUCTION</scope>
    <scope>DISRUPTION PHENOTYPE</scope>
</reference>
<reference evidence="18" key="6">
    <citation type="journal article" date="2011" name="Cell">
        <title>A conserved SREBP-1/phosphatidylcholine feedback circuit regulates lipogenesis in metazoans.</title>
        <authorList>
            <person name="Walker A.K."/>
            <person name="Jacobs R.L."/>
            <person name="Watts J.L."/>
            <person name="Rottiers V."/>
            <person name="Jiang K."/>
            <person name="Finnegan D.M."/>
            <person name="Shioda T."/>
            <person name="Hansen M."/>
            <person name="Yang F."/>
            <person name="Niebergall L.J."/>
            <person name="Vance D.E."/>
            <person name="Tzoneva M."/>
            <person name="Hart A.C."/>
            <person name="Naeaer A.M."/>
        </authorList>
    </citation>
    <scope>FUNCTION</scope>
    <scope>SUBCELLULAR LOCATION</scope>
</reference>
<reference evidence="18" key="7">
    <citation type="journal article" date="2017" name="Genes (Basel)">
        <title>The MXL-3/SBP-1 Axis Is Responsible for Glucose-Dependent Fat Accumulation in C. elegans.</title>
        <authorList>
            <person name="Mejia-Martinez F."/>
            <person name="Franco-Juarez B."/>
            <person name="Moreno-Arriola E."/>
            <person name="Hernandez-Vazquez A."/>
            <person name="Martinez-Avila M."/>
            <person name="Gomez-Manzo S."/>
            <person name="Marcial-Quino J."/>
            <person name="Carvajal K."/>
            <person name="Velazquez-Arellano A."/>
            <person name="Ortega-Cuellar D."/>
        </authorList>
    </citation>
    <scope>FUNCTION</scope>
    <scope>INDUCTION</scope>
</reference>
<reference evidence="18" key="8">
    <citation type="journal article" date="2017" name="J. Lipid Res.">
        <title>Zinc mediates the SREBP-SCD axis to regulate lipid metabolism in Caenorhabditis elegans.</title>
        <authorList>
            <person name="Zhang J.J."/>
            <person name="Hao J.J."/>
            <person name="Zhang Y.R."/>
            <person name="Wang Y.L."/>
            <person name="Li M.Y."/>
            <person name="Miao H.L."/>
            <person name="Zou X.J."/>
            <person name="Liang B."/>
        </authorList>
    </citation>
    <scope>FUNCTION</scope>
    <scope>SUBCELLULAR LOCATION</scope>
</reference>
<reference evidence="18" key="9">
    <citation type="journal article" date="2020" name="Biochem. Biophys. Res. Commun.">
        <title>Lipid metabolic sensors of MDT-15 and SBP-1 regulated the response to simulated microgravity in the intestine of Caenorhabditis elegans.</title>
        <authorList>
            <person name="Liu H."/>
            <person name="Li D."/>
            <person name="Zhang R."/>
            <person name="Sun L."/>
            <person name="Wang D."/>
        </authorList>
    </citation>
    <scope>FUNCTION</scope>
    <scope>INDUCTION</scope>
    <scope>DISRUPTION PHENOTYPE</scope>
</reference>
<reference evidence="18" key="10">
    <citation type="journal article" date="2020" name="PLoS Biol.">
        <title>Regulation of glial size by eicosapentaenoic acid through a novel Golgi apparatus mechanism.</title>
        <authorList>
            <person name="Zhang A."/>
            <person name="Guan Z."/>
            <person name="Ockerman K."/>
            <person name="Dong P."/>
            <person name="Guo J."/>
            <person name="Wang Z."/>
            <person name="Yan D."/>
        </authorList>
    </citation>
    <scope>FUNCTION</scope>
    <scope>SUBCELLULAR LOCATION</scope>
    <scope>TISSUE SPECIFICITY</scope>
</reference>
<reference evidence="18" key="11">
    <citation type="journal article" date="2022" name="Nat. Commun.">
        <title>Histone H3K4me3 modification is a transgenerational epigenetic signal for lipid metabolism in Caenorhabditis elegans.</title>
        <authorList>
            <person name="Wan Q.L."/>
            <person name="Meng X."/>
            <person name="Wang C."/>
            <person name="Dai W."/>
            <person name="Luo Z."/>
            <person name="Yin Z."/>
            <person name="Ju Z."/>
            <person name="Fu X."/>
            <person name="Yang J."/>
            <person name="Ye Q."/>
            <person name="Zhang Z.H."/>
            <person name="Zhou Q."/>
        </authorList>
    </citation>
    <scope>FUNCTION</scope>
    <scope>DISRUPTION PHENOTYPE</scope>
</reference>
<sequence>MNEEFEGDVPMSDPFLSLVTKLDDIAPFPNNDPLDFDMEHNWQEPGPSQQPDPSIPGNQHSPPQEYYDIDGQRDVSTLHSLLNHNNDDFFSMRFSPPNFDLGGGRGPSLAATQQLSGEGPASMLNPLQTSPPSGGYPPADAYRPLSLAQQLAAPAMTPHQAASLFVNTNGIDQKNFTHAMLSPPHHTSMTPQPYTEAMEHINGYMSPYDQAQGPSGPSYYSQHHQSPPPHHHHHHPMPKIHENPEQVASPSIEDAPETKPTHLVEPQSPKSPQNMKEELLRLLVNMSPSEVERLKNKKSGACSATNGPSRSKEKAAKIVIQETAEGDEDEDDEDSDSGETMSQGTTIIVRRPKTERRTAHNLIEKKYRCSINDRIQQLKVLLCGDEAKLSKSATLRRAIEHIEEVEHENQVLKHHVEQMRKTLQNNRLPYPEPIQYTEYSARSPVESSPSPPRNERKRSRMSTTTPMKNGTRDGSSKVTLFAMLLAVLIFNPIGLLAGSAIFSKAAAEAPIASPFEHGRVIDDPDGTSTRTLFWEGSIINMSYVWVFNILMIIYVVVKLLIHGDPVQDFMSVSWQTFVTTREKARAELNSGNLKDAQRKFCECLATLDRSLPSPGVDSVFSVGWECVRHLLNWLWIGRYIARRRRSTTKPVSVVCRSHAQTAVLYHEIHQLHLMGITGNFEDTYEPSALTGLFMSLCAVNLAEAAGASNDGLPRAVMAQIYISASIQCRLALPNLLAPFFSGYFLRRARRHVRRAPEHSVSHLLWIFHPATRKFMSDAKRLEHVLSSKQKQLRFGSFVEDEQLSPLARIRTTLKVYLLSKLVQELVGGDEIFTKNVERILNDNDRLDDEVDVVDVSRLLVTISTQCAAILTNEKDESAKFGTWISRNGDACCTWWTHVLTCGIYWRSNKNELARQHYSLIRNCPPKILTDNLGLAVGHALCARKICIDDRDSPKVSQYVCIHTKKSLESLRLFSTSSRASGVVSGIQEGTRRMAYEWIMNSLLDAWRSNLFASKPYWTQSFKGQSTFSTLYQEAYNHYAIINGTRGDCWRLFVYELTCRMLNGANPQATWSGVRRVRSTKMDAVRGRVSMRRSAQPDAFHLHTLVKLHTSMDL</sequence>
<proteinExistence type="evidence at transcript level"/>
<accession>Q9XX00</accession>
<feature type="chain" id="PRO_0000456352" description="Sterol regulatory element binding protein sbp-1">
    <location>
        <begin position="1"/>
        <end position="1113"/>
    </location>
</feature>
<feature type="chain" id="PRO_0000456353" description="Processed sterol regulatory element binding protein sbp-1" evidence="8">
    <location>
        <begin position="1"/>
        <end status="unknown"/>
    </location>
</feature>
<feature type="transmembrane region" description="Helical" evidence="3">
    <location>
        <begin position="478"/>
        <end position="498"/>
    </location>
</feature>
<feature type="transmembrane region" description="Helical" evidence="3">
    <location>
        <begin position="541"/>
        <end position="561"/>
    </location>
</feature>
<feature type="domain" description="bHLH" evidence="4">
    <location>
        <begin position="355"/>
        <end position="405"/>
    </location>
</feature>
<feature type="region of interest" description="Transcriptional activation (acidic)" evidence="1">
    <location>
        <begin position="1"/>
        <end position="52"/>
    </location>
</feature>
<feature type="region of interest" description="Disordered" evidence="5">
    <location>
        <begin position="24"/>
        <end position="68"/>
    </location>
</feature>
<feature type="region of interest" description="Disordered" evidence="5">
    <location>
        <begin position="101"/>
        <end position="132"/>
    </location>
</feature>
<feature type="region of interest" description="Disordered" evidence="5">
    <location>
        <begin position="206"/>
        <end position="274"/>
    </location>
</feature>
<feature type="region of interest" description="Disordered" evidence="5">
    <location>
        <begin position="290"/>
        <end position="345"/>
    </location>
</feature>
<feature type="region of interest" description="Basic motif" evidence="4">
    <location>
        <begin position="355"/>
        <end position="368"/>
    </location>
</feature>
<feature type="region of interest" description="Helix-loop-helix motif" evidence="4">
    <location>
        <begin position="369"/>
        <end position="405"/>
    </location>
</feature>
<feature type="region of interest" description="Disordered" evidence="5">
    <location>
        <begin position="437"/>
        <end position="472"/>
    </location>
</feature>
<feature type="coiled-coil region" evidence="3">
    <location>
        <begin position="395"/>
        <end position="422"/>
    </location>
</feature>
<feature type="compositionally biased region" description="Basic residues" evidence="5">
    <location>
        <begin position="229"/>
        <end position="238"/>
    </location>
</feature>
<feature type="compositionally biased region" description="Acidic residues" evidence="5">
    <location>
        <begin position="324"/>
        <end position="337"/>
    </location>
</feature>